<sequence length="648" mass="74482">MDKTLSRNEAKELMQLLGLDMTCWGNLPLMRTKYLSKCKEFHPDKGGNEEKMKKLNSLYLKLQECVSTVHQLNEEEDEVWSSSQIPTYGTPDWDYWWSQFNSYWEEELRCNEEMPKSPGETPTKRTREDDEEPQCSQATPPKKKKDNATDASLSFPKELEEFVSQAVFSNRTLTAFVIHTTKEKAETLYKKLLSKFKCNFASRHSYYNTALVFILTPFRHRVSAVNNFCKGYCTISFLFCKGVNNAYGLYSRMTRDPFTLCEENIPGGLKENDFKAEDLYGEFKDQLNWKALSEFALELGIDDVYLLLGLYLQLSIKVEECEKCNSNEDATHNRLHMEHQKNALLFSDSKSQKNVCQQAIDVVIAKRRVDSLNMSREDLLARRFEKILDKMDKTIKGEQDVLLYMAGVAWYLGLNGKIDELVYRYLKVIVENVPKKRYWVFKGPINSGKTTVAAALLDLCGGKALNINIPADRLNFELGVAIDQFTVVFEDVKGQVGDNKLLPSGNGMSNLDNLRDYLDGSVKVNLEKKHLNKRSQIFPPGIVTMNEYLVPATLAPRFHKTVLFTPKRHLKESLDKTPELMVKRVLQSGMCILLMLIWCRPVSDFHPCIQAKVVYWKELLDKYIGLTEFADMQMNVTNGCNILEKHNA</sequence>
<feature type="chain" id="PRO_0000294069" description="Large T antigen">
    <location>
        <begin position="1"/>
        <end position="648"/>
    </location>
</feature>
<feature type="domain" description="J" evidence="2">
    <location>
        <begin position="12"/>
        <end position="89"/>
    </location>
</feature>
<feature type="domain" description="SF3 helicase" evidence="3">
    <location>
        <begin position="417"/>
        <end position="579"/>
    </location>
</feature>
<feature type="DNA-binding region" description="T-ag OBD" evidence="4">
    <location>
        <begin position="156"/>
        <end position="271"/>
    </location>
</feature>
<feature type="zinc finger region" description="T-ag D1-type" evidence="5">
    <location>
        <begin position="284"/>
        <end position="376"/>
    </location>
</feature>
<feature type="region of interest" description="Disordered" evidence="6">
    <location>
        <begin position="111"/>
        <end position="150"/>
    </location>
</feature>
<feature type="short sequence motif" description="LXCXE motif" evidence="1">
    <location>
        <begin position="108"/>
        <end position="112"/>
    </location>
</feature>
<feature type="short sequence motif" description="Nuclear localization signal" evidence="1">
    <location>
        <begin position="140"/>
        <end position="147"/>
    </location>
</feature>
<feature type="binding site" evidence="5">
    <location>
        <position position="321"/>
    </location>
    <ligand>
        <name>Zn(2+)</name>
        <dbReference type="ChEBI" id="CHEBI:29105"/>
    </ligand>
</feature>
<feature type="binding site" evidence="5">
    <location>
        <position position="324"/>
    </location>
    <ligand>
        <name>Zn(2+)</name>
        <dbReference type="ChEBI" id="CHEBI:29105"/>
    </ligand>
</feature>
<feature type="binding site" evidence="5">
    <location>
        <position position="332"/>
    </location>
    <ligand>
        <name>Zn(2+)</name>
        <dbReference type="ChEBI" id="CHEBI:29105"/>
    </ligand>
</feature>
<feature type="binding site" evidence="5">
    <location>
        <position position="336"/>
    </location>
    <ligand>
        <name>Zn(2+)</name>
        <dbReference type="ChEBI" id="CHEBI:29105"/>
    </ligand>
</feature>
<feature type="binding site" evidence="3">
    <location>
        <begin position="443"/>
        <end position="450"/>
    </location>
    <ligand>
        <name>ATP</name>
        <dbReference type="ChEBI" id="CHEBI:30616"/>
    </ligand>
</feature>
<feature type="modified residue" description="N-acetylmethionine; by host" evidence="1">
    <location>
        <position position="1"/>
    </location>
</feature>
<feature type="modified residue" description="Phosphoserine; by host" evidence="1">
    <location>
        <position position="117"/>
    </location>
</feature>
<feature type="modified residue" description="Phosphothreonine; by host" evidence="1">
    <location>
        <position position="139"/>
    </location>
</feature>
<feature type="sequence variant" description="In strain: Isolate S3 and Isolate S5.">
    <original>D</original>
    <variation>G</variation>
    <location>
        <position position="361"/>
    </location>
</feature>
<feature type="sequence variant" description="In strain: Isolate S5.">
    <original>V</original>
    <variation>I</variation>
    <location>
        <position position="440"/>
    </location>
</feature>
<feature type="sequence variant" description="In strain: Isolate S2.">
    <original>G</original>
    <variation>E</variation>
    <location>
        <position position="520"/>
    </location>
</feature>
<feature type="sequence variant" description="In strain: Isolate B0.">
    <original>L</original>
    <variation>I</variation>
    <location>
        <position position="594"/>
    </location>
</feature>
<protein>
    <recommendedName>
        <fullName>Large T antigen</fullName>
        <shortName>LT</shortName>
        <shortName>LT-AG</shortName>
        <ecNumber evidence="1">5.6.2.4</ecNumber>
    </recommendedName>
    <alternativeName>
        <fullName evidence="7">DNA 3'-5' helicase large T antigen</fullName>
    </alternativeName>
</protein>
<keyword id="KW-0002">3D-structure</keyword>
<keyword id="KW-0007">Acetylation</keyword>
<keyword id="KW-0025">Alternative splicing</keyword>
<keyword id="KW-0067">ATP-binding</keyword>
<keyword id="KW-0235">DNA replication</keyword>
<keyword id="KW-0238">DNA-binding</keyword>
<keyword id="KW-0244">Early protein</keyword>
<keyword id="KW-1078">G1/S host cell cycle checkpoint dysregulation by virus</keyword>
<keyword id="KW-0347">Helicase</keyword>
<keyword id="KW-1048">Host nucleus</keyword>
<keyword id="KW-0945">Host-virus interaction</keyword>
<keyword id="KW-0378">Hydrolase</keyword>
<keyword id="KW-1090">Inhibition of host innate immune response by virus</keyword>
<keyword id="KW-1114">Inhibition of host interferon signaling pathway by virus</keyword>
<keyword id="KW-1096">Inhibition of host JAK1 by virus</keyword>
<keyword id="KW-0922">Interferon antiviral system evasion</keyword>
<keyword id="KW-0413">Isomerase</keyword>
<keyword id="KW-0479">Metal-binding</keyword>
<keyword id="KW-1121">Modulation of host cell cycle by virus</keyword>
<keyword id="KW-0547">Nucleotide-binding</keyword>
<keyword id="KW-0553">Oncogene</keyword>
<keyword id="KW-0597">Phosphoprotein</keyword>
<keyword id="KW-1185">Reference proteome</keyword>
<keyword id="KW-0899">Viral immunoevasion</keyword>
<keyword id="KW-0862">Zinc</keyword>
<keyword id="KW-0863">Zinc-finger</keyword>
<organismHost>
    <name type="scientific">Homo sapiens</name>
    <name type="common">Human</name>
    <dbReference type="NCBI Taxonomy" id="9606"/>
</organismHost>
<comment type="function">
    <text evidence="1">Isoform large T antigen is a key early protein essential for both driving viral replication and inducing cellular transformation. Plays a role in viral genome replication by driving entry of quiescent cells into the cell cycle and by autoregulating the synthesis of viral early mRNA. Displays highly oncogenic activities by corrupting the host cellular checkpoint mechanisms that guard cell division and the transcription, replication, and repair of DNA. Participates in the modulation of cellular gene expression preceeding viral DNA replication. This step involves binding to host key cell cycle regulators retinoblastoma protein RB1/pRb and TP53. Induces the disassembly of host E2F1 transcription factors from RB1, thus promoting transcriptional activation of E2F1-regulated S-phase genes. Inhibits host TP53 binding to DNA, abrogating the ability of TP53 to stimulate gene expression. Plays the role of a TFIID-associated factor (TAF) in transcription initiation for all three RNA polymerases, by stabilizing the TBP-TFIIA complex on promoters. Initiates viral DNA replication and unwinding via interactions with the viral origin of replication. Binds two adjacent sites in the SV40 origin. The replication fork movement is facilitated by Large T antigen helicase activity. Has processive 3'-5' DNA helicase activity which requires a short 3' single-stranded region and ATP. Activates the transcription of viral late mRNA, through host TBP and TFIIA stabilization. Interferes with histone deacetylation mediated by HDAC1, leading to activation of transcription.</text>
</comment>
<comment type="catalytic activity">
    <reaction evidence="1">
        <text>Couples ATP hydrolysis with the unwinding of duplex DNA by translocating in the 3'-5' direction.</text>
        <dbReference type="EC" id="5.6.2.4"/>
    </reaction>
</comment>
<comment type="catalytic activity">
    <reaction evidence="1">
        <text>ATP + H2O = ADP + phosphate + H(+)</text>
        <dbReference type="Rhea" id="RHEA:13065"/>
        <dbReference type="ChEBI" id="CHEBI:15377"/>
        <dbReference type="ChEBI" id="CHEBI:15378"/>
        <dbReference type="ChEBI" id="CHEBI:30616"/>
        <dbReference type="ChEBI" id="CHEBI:43474"/>
        <dbReference type="ChEBI" id="CHEBI:456216"/>
        <dbReference type="EC" id="5.6.2.4"/>
    </reaction>
</comment>
<comment type="cofactor">
    <cofactor evidence="1">
        <name>Mg(2+)</name>
        <dbReference type="ChEBI" id="CHEBI:18420"/>
    </cofactor>
    <text evidence="1">DNA helicase activity requires Mg(2+).</text>
</comment>
<comment type="subunit">
    <text evidence="1">Forms homohexamers in the presence of ATP. Interacts with host HDAC1. Interacts (via LXCXE domain) with host RB1; the interaction induces the aberrant dissociation of RB1-E2F1 complex thereby disrupting RB1's activity. Interacts (via LXCXE domain) with host pRB-related proteins RBL1 and RBL2. Interacts (via C-terminus) with host TOP1 and POLA1 allowing DNA replication. Interacts with host TP53, inhibiting TP53 binding to DNA. Interacts with host preinitiation complex components TBP, TFIIA and TFIID to regulate transcription initiation.</text>
</comment>
<comment type="subcellular location">
    <subcellularLocation>
        <location evidence="1">Host nucleus</location>
    </subcellularLocation>
</comment>
<comment type="alternative products">
    <event type="alternative splicing"/>
    <isoform>
        <id>A5HBG1-1</id>
        <name>Large T antigen</name>
        <sequence type="displayed"/>
    </isoform>
    <isoform>
        <id>A5HBD7-1</id>
        <name>Small t antigen</name>
        <sequence type="external"/>
    </isoform>
</comment>
<comment type="domain">
    <text evidence="1">The J domain is essential for multiple viral activities, including virion assembly, viral DNA replication, transformation and transcriptional activation.</text>
</comment>
<comment type="domain">
    <text evidence="1">The LXCXE motif specifically binds to host pRB, RBL1, and RBL2.</text>
</comment>
<comment type="domain">
    <text evidence="1">The zinc finger region contributes to protein-protein interactions essential for the assembly of stable T-antigen hexamers at the origin of replication. The hexamers are required for subsequent alterations in the structure of origin DNA.</text>
</comment>
<comment type="domain">
    <text evidence="1">The ATP binding/ATPase domain is required for proper hexamer assembly and helicase activity.</text>
</comment>
<comment type="PTM">
    <text evidence="1">Phosphorylated on both serine and threonine residues. Small t antigen inhibits the dephosphorylation by the AC form of PP2A.</text>
</comment>
<comment type="PTM">
    <text evidence="1">O-Glycosylated near the C-terminal region.</text>
</comment>
<comment type="PTM">
    <text evidence="1">Acetylated by CBP in a TP53-dependent manner.</text>
</comment>
<organism>
    <name type="scientific">WU polyomavirus</name>
    <name type="common">WUPyV</name>
    <dbReference type="NCBI Taxonomy" id="440266"/>
    <lineage>
        <taxon>Viruses</taxon>
        <taxon>Monodnaviria</taxon>
        <taxon>Shotokuvirae</taxon>
        <taxon>Cossaviricota</taxon>
        <taxon>Papovaviricetes</taxon>
        <taxon>Sepolyvirales</taxon>
        <taxon>Polyomaviridae</taxon>
        <taxon>Betapolyomavirus</taxon>
        <taxon>Betapolyomavirus quartihominis</taxon>
    </lineage>
</organism>
<evidence type="ECO:0000250" key="1">
    <source>
        <dbReference type="UniProtKB" id="P03070"/>
    </source>
</evidence>
<evidence type="ECO:0000255" key="2">
    <source>
        <dbReference type="PROSITE-ProRule" id="PRU00286"/>
    </source>
</evidence>
<evidence type="ECO:0000255" key="3">
    <source>
        <dbReference type="PROSITE-ProRule" id="PRU00551"/>
    </source>
</evidence>
<evidence type="ECO:0000255" key="4">
    <source>
        <dbReference type="PROSITE-ProRule" id="PRU00620"/>
    </source>
</evidence>
<evidence type="ECO:0000255" key="5">
    <source>
        <dbReference type="PROSITE-ProRule" id="PRU00671"/>
    </source>
</evidence>
<evidence type="ECO:0000256" key="6">
    <source>
        <dbReference type="SAM" id="MobiDB-lite"/>
    </source>
</evidence>
<evidence type="ECO:0000305" key="7"/>
<accession>A5HBG1</accession>
<accession>A5HBD6</accession>
<accession>A5HBD9</accession>
<accession>A5HBE6</accession>
<accession>A5HBF1</accession>
<proteinExistence type="evidence at protein level"/>
<dbReference type="EC" id="5.6.2.4" evidence="1"/>
<dbReference type="EMBL" id="EF444549">
    <property type="protein sequence ID" value="ABQ09292.1"/>
    <property type="molecule type" value="Genomic_DNA"/>
</dbReference>
<dbReference type="EMBL" id="EF444550">
    <property type="protein sequence ID" value="ABQ09297.1"/>
    <property type="molecule type" value="Genomic_DNA"/>
</dbReference>
<dbReference type="EMBL" id="EF444551">
    <property type="protein sequence ID" value="ABQ09302.1"/>
    <property type="molecule type" value="Genomic_DNA"/>
</dbReference>
<dbReference type="EMBL" id="EF444552">
    <property type="protein sequence ID" value="ABQ09307.1"/>
    <property type="molecule type" value="Genomic_DNA"/>
</dbReference>
<dbReference type="EMBL" id="EF444553">
    <property type="protein sequence ID" value="ABQ09312.1"/>
    <property type="molecule type" value="Genomic_DNA"/>
</dbReference>
<dbReference type="EMBL" id="EF444554">
    <property type="protein sequence ID" value="ABQ09317.1"/>
    <property type="molecule type" value="Genomic_DNA"/>
</dbReference>
<dbReference type="RefSeq" id="YP_001285488.1">
    <property type="nucleotide sequence ID" value="NC_009539.1"/>
</dbReference>
<dbReference type="PDB" id="8TUS">
    <property type="method" value="X-ray"/>
    <property type="resolution" value="2.60 A"/>
    <property type="chains" value="C=124-146"/>
</dbReference>
<dbReference type="PDBsum" id="8TUS"/>
<dbReference type="SMR" id="A5HBG1"/>
<dbReference type="GeneID" id="5309721"/>
<dbReference type="KEGG" id="vg:5309721"/>
<dbReference type="OrthoDB" id="14669at10239"/>
<dbReference type="Proteomes" id="UP000096057">
    <property type="component" value="Genome"/>
</dbReference>
<dbReference type="Proteomes" id="UP000114161">
    <property type="component" value="Genome"/>
</dbReference>
<dbReference type="Proteomes" id="UP000118542">
    <property type="component" value="Genome"/>
</dbReference>
<dbReference type="Proteomes" id="UP000119623">
    <property type="component" value="Genome"/>
</dbReference>
<dbReference type="Proteomes" id="UP000148617">
    <property type="component" value="Genome"/>
</dbReference>
<dbReference type="Proteomes" id="UP000153939">
    <property type="component" value="Segment"/>
</dbReference>
<dbReference type="GO" id="GO:0042025">
    <property type="term" value="C:host cell nucleus"/>
    <property type="evidence" value="ECO:0007669"/>
    <property type="project" value="UniProtKB-SubCell"/>
</dbReference>
<dbReference type="GO" id="GO:0005524">
    <property type="term" value="F:ATP binding"/>
    <property type="evidence" value="ECO:0007669"/>
    <property type="project" value="UniProtKB-KW"/>
</dbReference>
<dbReference type="GO" id="GO:0016887">
    <property type="term" value="F:ATP hydrolysis activity"/>
    <property type="evidence" value="ECO:0007669"/>
    <property type="project" value="RHEA"/>
</dbReference>
<dbReference type="GO" id="GO:0003688">
    <property type="term" value="F:DNA replication origin binding"/>
    <property type="evidence" value="ECO:0007669"/>
    <property type="project" value="InterPro"/>
</dbReference>
<dbReference type="GO" id="GO:0004386">
    <property type="term" value="F:helicase activity"/>
    <property type="evidence" value="ECO:0007669"/>
    <property type="project" value="UniProtKB-KW"/>
</dbReference>
<dbReference type="GO" id="GO:0008270">
    <property type="term" value="F:zinc ion binding"/>
    <property type="evidence" value="ECO:0007669"/>
    <property type="project" value="UniProtKB-KW"/>
</dbReference>
<dbReference type="GO" id="GO:0006260">
    <property type="term" value="P:DNA replication"/>
    <property type="evidence" value="ECO:0007669"/>
    <property type="project" value="UniProtKB-KW"/>
</dbReference>
<dbReference type="GO" id="GO:0039645">
    <property type="term" value="P:symbiont-mediated perturbation of host cell cycle G1/S transition checkpoint"/>
    <property type="evidence" value="ECO:0007669"/>
    <property type="project" value="UniProtKB-KW"/>
</dbReference>
<dbReference type="GO" id="GO:0052170">
    <property type="term" value="P:symbiont-mediated suppression of host innate immune response"/>
    <property type="evidence" value="ECO:0007669"/>
    <property type="project" value="UniProtKB-KW"/>
</dbReference>
<dbReference type="GO" id="GO:0039576">
    <property type="term" value="P:symbiont-mediated suppression of host JAK-STAT cascade via inhibition of JAK1 activity"/>
    <property type="evidence" value="ECO:0007669"/>
    <property type="project" value="UniProtKB-KW"/>
</dbReference>
<dbReference type="GO" id="GO:0039502">
    <property type="term" value="P:symbiont-mediated suppression of host type I interferon-mediated signaling pathway"/>
    <property type="evidence" value="ECO:0007669"/>
    <property type="project" value="UniProtKB-KW"/>
</dbReference>
<dbReference type="FunFam" id="1.10.287.110:FF:000161">
    <property type="entry name" value="Small t antigen"/>
    <property type="match status" value="1"/>
</dbReference>
<dbReference type="Gene3D" id="3.40.1310.20">
    <property type="match status" value="1"/>
</dbReference>
<dbReference type="Gene3D" id="1.10.287.110">
    <property type="entry name" value="DnaJ domain"/>
    <property type="match status" value="1"/>
</dbReference>
<dbReference type="Gene3D" id="1.20.1050.70">
    <property type="entry name" value="Large T antigen, SV40, domain 3"/>
    <property type="match status" value="1"/>
</dbReference>
<dbReference type="Gene3D" id="3.40.50.300">
    <property type="entry name" value="P-loop containing nucleotide triphosphate hydrolases"/>
    <property type="match status" value="1"/>
</dbReference>
<dbReference type="Gene3D" id="1.10.10.510">
    <property type="entry name" value="Zinc finger, large T-antigen D1 domain"/>
    <property type="match status" value="1"/>
</dbReference>
<dbReference type="InterPro" id="IPR001623">
    <property type="entry name" value="DnaJ_domain"/>
</dbReference>
<dbReference type="InterPro" id="IPR014015">
    <property type="entry name" value="Helicase_SF3_DNA-vir"/>
</dbReference>
<dbReference type="InterPro" id="IPR036869">
    <property type="entry name" value="J_dom_sf"/>
</dbReference>
<dbReference type="InterPro" id="IPR016392">
    <property type="entry name" value="Lg_T_Ag_polyomavir"/>
</dbReference>
<dbReference type="InterPro" id="IPR010932">
    <property type="entry name" value="Lg_T_Ag_Polyomavir_C"/>
</dbReference>
<dbReference type="InterPro" id="IPR027417">
    <property type="entry name" value="P-loop_NTPase"/>
</dbReference>
<dbReference type="InterPro" id="IPR003133">
    <property type="entry name" value="T_Ag_DNA-bd"/>
</dbReference>
<dbReference type="InterPro" id="IPR017910">
    <property type="entry name" value="Znf_lg_T-Ag_D1-typ"/>
</dbReference>
<dbReference type="InterPro" id="IPR037102">
    <property type="entry name" value="Znf_lg_T-Ag_D1_dom_sf"/>
</dbReference>
<dbReference type="Pfam" id="PF06431">
    <property type="entry name" value="Polyoma_lg_T_C"/>
    <property type="match status" value="1"/>
</dbReference>
<dbReference type="Pfam" id="PF02217">
    <property type="entry name" value="T_Ag_DNA_bind"/>
    <property type="match status" value="1"/>
</dbReference>
<dbReference type="PIRSF" id="PIRSF003368">
    <property type="entry name" value="Large_T_antigen_polyomaV"/>
    <property type="match status" value="1"/>
</dbReference>
<dbReference type="SMART" id="SM00271">
    <property type="entry name" value="DnaJ"/>
    <property type="match status" value="1"/>
</dbReference>
<dbReference type="SUPFAM" id="SSF46565">
    <property type="entry name" value="Chaperone J-domain"/>
    <property type="match status" value="1"/>
</dbReference>
<dbReference type="SUPFAM" id="SSF55464">
    <property type="entry name" value="Origin of replication-binding domain, RBD-like"/>
    <property type="match status" value="1"/>
</dbReference>
<dbReference type="SUPFAM" id="SSF52540">
    <property type="entry name" value="P-loop containing nucleoside triphosphate hydrolases"/>
    <property type="match status" value="1"/>
</dbReference>
<dbReference type="PROSITE" id="PS50076">
    <property type="entry name" value="DNAJ_2"/>
    <property type="match status" value="1"/>
</dbReference>
<dbReference type="PROSITE" id="PS51206">
    <property type="entry name" value="SF3_HELICASE_1"/>
    <property type="match status" value="1"/>
</dbReference>
<dbReference type="PROSITE" id="PS51287">
    <property type="entry name" value="T_AG_OBD"/>
    <property type="match status" value="1"/>
</dbReference>
<dbReference type="PROSITE" id="PS51341">
    <property type="entry name" value="ZF_LTAG_D1"/>
    <property type="match status" value="1"/>
</dbReference>
<name>LT_POVWU</name>
<reference key="1">
    <citation type="journal article" date="2007" name="PLoS Pathog.">
        <title>Identification of a novel polyomavirus from patients with acute respiratory tract infections.</title>
        <authorList>
            <person name="Gaynor A.M."/>
            <person name="Nissen M.D."/>
            <person name="Whiley D.M."/>
            <person name="Mackay I.M."/>
            <person name="Lambert S.B."/>
            <person name="Wu G."/>
            <person name="Brennan D.C."/>
            <person name="Storch G.A."/>
            <person name="Sloots T.P."/>
            <person name="Wang D."/>
        </authorList>
    </citation>
    <scope>NUCLEOTIDE SEQUENCE [GENOMIC DNA]</scope>
    <source>
        <strain>S5</strain>
    </source>
</reference>